<organism>
    <name type="scientific">Enterocytozoon bieneusi (strain H348)</name>
    <name type="common">Microsporidian parasite</name>
    <dbReference type="NCBI Taxonomy" id="481877"/>
    <lineage>
        <taxon>Eukaryota</taxon>
        <taxon>Fungi</taxon>
        <taxon>Fungi incertae sedis</taxon>
        <taxon>Microsporidia</taxon>
        <taxon>Enterocytozoonidae</taxon>
        <taxon>Enterocytozoon</taxon>
    </lineage>
</organism>
<feature type="chain" id="PRO_0000388379" description="Probable isoleucine--tRNA ligase, cytoplasmic">
    <location>
        <begin position="1"/>
        <end position="953"/>
    </location>
</feature>
<feature type="short sequence motif" description="'HIGH' region" evidence="1">
    <location>
        <begin position="45"/>
        <end position="55"/>
    </location>
</feature>
<feature type="short sequence motif" description="'KMSKS' region" evidence="1">
    <location>
        <begin position="634"/>
        <end position="638"/>
    </location>
</feature>
<feature type="binding site" evidence="1">
    <location>
        <position position="637"/>
    </location>
    <ligand>
        <name>ATP</name>
        <dbReference type="ChEBI" id="CHEBI:30616"/>
    </ligand>
</feature>
<evidence type="ECO:0000250" key="1"/>
<evidence type="ECO:0000305" key="2"/>
<comment type="catalytic activity">
    <reaction>
        <text>tRNA(Ile) + L-isoleucine + ATP = L-isoleucyl-tRNA(Ile) + AMP + diphosphate</text>
        <dbReference type="Rhea" id="RHEA:11060"/>
        <dbReference type="Rhea" id="RHEA-COMP:9666"/>
        <dbReference type="Rhea" id="RHEA-COMP:9695"/>
        <dbReference type="ChEBI" id="CHEBI:30616"/>
        <dbReference type="ChEBI" id="CHEBI:33019"/>
        <dbReference type="ChEBI" id="CHEBI:58045"/>
        <dbReference type="ChEBI" id="CHEBI:78442"/>
        <dbReference type="ChEBI" id="CHEBI:78528"/>
        <dbReference type="ChEBI" id="CHEBI:456215"/>
        <dbReference type="EC" id="6.1.1.5"/>
    </reaction>
</comment>
<comment type="subcellular location">
    <subcellularLocation>
        <location evidence="1">Cytoplasm</location>
    </subcellularLocation>
</comment>
<comment type="similarity">
    <text evidence="2">Belongs to the class-I aminoacyl-tRNA synthetase family.</text>
</comment>
<reference key="1">
    <citation type="journal article" date="2007" name="PLoS ONE">
        <title>Patterns of genome evolution among the microsporidian parasites Encephalitozoon cuniculi, Antonospora locustae and Enterocytozoon bieneusi.</title>
        <authorList>
            <person name="Corradi N."/>
            <person name="Akiyoshi D.E."/>
            <person name="Morrison H.G."/>
            <person name="Feng X."/>
            <person name="Weiss L.M."/>
            <person name="Tzipori S."/>
            <person name="Keeling P.J."/>
        </authorList>
    </citation>
    <scope>NUCLEOTIDE SEQUENCE [LARGE SCALE GENOMIC DNA]</scope>
    <source>
        <strain>H348</strain>
    </source>
</reference>
<reference key="2">
    <citation type="journal article" date="2009" name="PLoS Pathog.">
        <title>Genomic survey of the non-cultivatable opportunistic human pathogen, Enterocytozoon bieneusi.</title>
        <authorList>
            <person name="Akiyoshi D.E."/>
            <person name="Morrison H.G."/>
            <person name="Lei S."/>
            <person name="Feng X."/>
            <person name="Zhang Q."/>
            <person name="Corradi N."/>
            <person name="Mayanja H."/>
            <person name="Tumwine J.K."/>
            <person name="Keeling P.J."/>
            <person name="Weiss L.M."/>
            <person name="Tzipori S."/>
        </authorList>
    </citation>
    <scope>NUCLEOTIDE SEQUENCE [LARGE SCALE GENOMIC DNA]</scope>
    <source>
        <strain>H348</strain>
    </source>
</reference>
<protein>
    <recommendedName>
        <fullName>Probable isoleucine--tRNA ligase, cytoplasmic</fullName>
        <ecNumber>6.1.1.5</ecNumber>
    </recommendedName>
    <alternativeName>
        <fullName>Isoleucyl-tRNA synthetase</fullName>
        <shortName>IleRS</shortName>
    </alternativeName>
</protein>
<sequence>MSDKIIDFSKIEKDILKFWTENKIFELCNKLSQGREEYVFFDGPPFATGLPHYGHILSGTIKDIIGRFYYQKGFHVERRFGWDCHGLPVEYEIDKKFNITDRNQILKMGIDVYNHECRKIVQKYTNEWEETVIRMGRWVDFKGSYKTMDLEFMESIWFIFKELFKRNKIYRGFKIMPFSTACKTALSNFEASQNYKNVSDPSVLVTFKIINPKDVLHNYENNDIEIFFVAWTTTPWTLPANCALVINPDYEYAIFYINNNSKKLYIMLKNRIEVYFKQFCITTVILGKELIGVSYATLFNYYENYITRGFFKTIGGNFVTITDGSGIVHTAPAFGEEDYNIFLKLGLLKPDEIPPCHIDENGKFTIAMEKYVNVPINNDISLNGVYFKDADKIILQILKPHLIYNSRIVHSYPFCWRSDTPLLYKLIPNWFVKITDIREELLTQNKKINWIPETIKYKRFQNWLSNAKDWAISRNRFWGTPLPIWARYENEIYNYTDLICVGSIKELEDLTNTKITDLHREHIDQLLIEHNGKTYKRIEDVLDCWFESGSMPYAQNHLKGIKVNNSLIDKLDNINLNNAYLIKENFPADFIGEGLDQTRGWFYTLHVISTILFNSPAFKNVIVNGIVLAEDGKKMSKRLKNYPDPMNIFNKYGADALRMYLISSPVVEAENLRFNENGVKEILKTLLIPWYNTLVFYKECQIQNHNHTLLLDAWIESELNILINKVNIDMSEYKLNNILNYALDFIENLNNWYIRINRKELKNNGLYLKTIIKRFSIVMSAFVPFFSDYSYQIVCSDKISVHLEMIPEYKSINSDFNFIKCIIDGIRHLREKYKLKLKKTLKEVIIVLDNININKNLFEKYEAVIKSECNTLDIILNDINDYSISTIIKPNFKELNKNKNVIKEKLDIISKLTVNDIENIKNGTHDININELLIETYIKDIEYSGVFITLELF</sequence>
<gene>
    <name type="ORF">EBI_22873</name>
</gene>
<proteinExistence type="inferred from homology"/>
<keyword id="KW-0030">Aminoacyl-tRNA synthetase</keyword>
<keyword id="KW-0067">ATP-binding</keyword>
<keyword id="KW-0963">Cytoplasm</keyword>
<keyword id="KW-0436">Ligase</keyword>
<keyword id="KW-0547">Nucleotide-binding</keyword>
<keyword id="KW-0648">Protein biosynthesis</keyword>
<dbReference type="EC" id="6.1.1.5"/>
<dbReference type="EMBL" id="ABGB01000039">
    <property type="protein sequence ID" value="EED43719.1"/>
    <property type="molecule type" value="Genomic_DNA"/>
</dbReference>
<dbReference type="RefSeq" id="XP_002650344.1">
    <property type="nucleotide sequence ID" value="XM_002650298.1"/>
</dbReference>
<dbReference type="SMR" id="B7XK16"/>
<dbReference type="FunCoup" id="B7XK16">
    <property type="interactions" value="325"/>
</dbReference>
<dbReference type="STRING" id="481877.B7XK16"/>
<dbReference type="VEuPathDB" id="MicrosporidiaDB:EBI_22873"/>
<dbReference type="HOGENOM" id="CLU_001493_1_1_1"/>
<dbReference type="InParanoid" id="B7XK16"/>
<dbReference type="OMA" id="EIIVIHK"/>
<dbReference type="OrthoDB" id="1706657at2759"/>
<dbReference type="GO" id="GO:0005829">
    <property type="term" value="C:cytosol"/>
    <property type="evidence" value="ECO:0007669"/>
    <property type="project" value="EnsemblFungi"/>
</dbReference>
<dbReference type="GO" id="GO:0002161">
    <property type="term" value="F:aminoacyl-tRNA deacylase activity"/>
    <property type="evidence" value="ECO:0007669"/>
    <property type="project" value="InterPro"/>
</dbReference>
<dbReference type="GO" id="GO:0005524">
    <property type="term" value="F:ATP binding"/>
    <property type="evidence" value="ECO:0007669"/>
    <property type="project" value="UniProtKB-KW"/>
</dbReference>
<dbReference type="GO" id="GO:0004822">
    <property type="term" value="F:isoleucine-tRNA ligase activity"/>
    <property type="evidence" value="ECO:0007669"/>
    <property type="project" value="UniProtKB-EC"/>
</dbReference>
<dbReference type="GO" id="GO:1990825">
    <property type="term" value="F:sequence-specific mRNA binding"/>
    <property type="evidence" value="ECO:0007669"/>
    <property type="project" value="EnsemblFungi"/>
</dbReference>
<dbReference type="GO" id="GO:0006428">
    <property type="term" value="P:isoleucyl-tRNA aminoacylation"/>
    <property type="evidence" value="ECO:0007669"/>
    <property type="project" value="EnsemblFungi"/>
</dbReference>
<dbReference type="CDD" id="cd00818">
    <property type="entry name" value="IleRS_core"/>
    <property type="match status" value="1"/>
</dbReference>
<dbReference type="FunFam" id="3.40.50.620:FF:000023">
    <property type="entry name" value="Isoleucyl-tRNA synthetase,cytoplasmic"/>
    <property type="match status" value="1"/>
</dbReference>
<dbReference type="Gene3D" id="3.40.50.620">
    <property type="entry name" value="HUPs"/>
    <property type="match status" value="2"/>
</dbReference>
<dbReference type="Gene3D" id="1.10.730.10">
    <property type="entry name" value="Isoleucyl-tRNA Synthetase, Domain 1"/>
    <property type="match status" value="1"/>
</dbReference>
<dbReference type="Gene3D" id="3.90.740.10">
    <property type="entry name" value="Valyl/Leucyl/Isoleucyl-tRNA synthetase, editing domain"/>
    <property type="match status" value="1"/>
</dbReference>
<dbReference type="InterPro" id="IPR001412">
    <property type="entry name" value="aa-tRNA-synth_I_CS"/>
</dbReference>
<dbReference type="InterPro" id="IPR002300">
    <property type="entry name" value="aa-tRNA-synth_Ia"/>
</dbReference>
<dbReference type="InterPro" id="IPR002301">
    <property type="entry name" value="Ile-tRNA-ligase"/>
</dbReference>
<dbReference type="InterPro" id="IPR023586">
    <property type="entry name" value="Ile-tRNA-ligase_type2"/>
</dbReference>
<dbReference type="InterPro" id="IPR013155">
    <property type="entry name" value="M/V/L/I-tRNA-synth_anticd-bd"/>
</dbReference>
<dbReference type="InterPro" id="IPR014729">
    <property type="entry name" value="Rossmann-like_a/b/a_fold"/>
</dbReference>
<dbReference type="InterPro" id="IPR009080">
    <property type="entry name" value="tRNAsynth_Ia_anticodon-bd"/>
</dbReference>
<dbReference type="InterPro" id="IPR009008">
    <property type="entry name" value="Val/Leu/Ile-tRNA-synth_edit"/>
</dbReference>
<dbReference type="NCBIfam" id="TIGR00392">
    <property type="entry name" value="ileS"/>
    <property type="match status" value="1"/>
</dbReference>
<dbReference type="PANTHER" id="PTHR42780:SF1">
    <property type="entry name" value="ISOLEUCINE--TRNA LIGASE, CYTOPLASMIC"/>
    <property type="match status" value="1"/>
</dbReference>
<dbReference type="PANTHER" id="PTHR42780">
    <property type="entry name" value="SOLEUCYL-TRNA SYNTHETASE"/>
    <property type="match status" value="1"/>
</dbReference>
<dbReference type="Pfam" id="PF08264">
    <property type="entry name" value="Anticodon_1"/>
    <property type="match status" value="1"/>
</dbReference>
<dbReference type="Pfam" id="PF00133">
    <property type="entry name" value="tRNA-synt_1"/>
    <property type="match status" value="1"/>
</dbReference>
<dbReference type="PRINTS" id="PR00984">
    <property type="entry name" value="TRNASYNTHILE"/>
</dbReference>
<dbReference type="SUPFAM" id="SSF47323">
    <property type="entry name" value="Anticodon-binding domain of a subclass of class I aminoacyl-tRNA synthetases"/>
    <property type="match status" value="1"/>
</dbReference>
<dbReference type="SUPFAM" id="SSF52374">
    <property type="entry name" value="Nucleotidylyl transferase"/>
    <property type="match status" value="1"/>
</dbReference>
<dbReference type="SUPFAM" id="SSF50677">
    <property type="entry name" value="ValRS/IleRS/LeuRS editing domain"/>
    <property type="match status" value="1"/>
</dbReference>
<dbReference type="PROSITE" id="PS00178">
    <property type="entry name" value="AA_TRNA_LIGASE_I"/>
    <property type="match status" value="1"/>
</dbReference>
<name>SYIC_ENTBH</name>
<accession>B7XK16</accession>